<protein>
    <recommendedName>
        <fullName evidence="1">Glycine dehydrogenase (decarboxylating) 1</fullName>
        <ecNumber evidence="1">1.4.4.2</ecNumber>
    </recommendedName>
    <alternativeName>
        <fullName evidence="1">Glycine cleavage system P-protein 1</fullName>
    </alternativeName>
    <alternativeName>
        <fullName evidence="1">Glycine decarboxylase 1</fullName>
    </alternativeName>
    <alternativeName>
        <fullName evidence="1">Glycine dehydrogenase (aminomethyl-transferring) 1</fullName>
    </alternativeName>
</protein>
<comment type="function">
    <text evidence="1">The glycine cleavage system catalyzes the degradation of glycine. The P protein binds the alpha-amino group of glycine through its pyridoxal phosphate cofactor; CO(2) is released and the remaining methylamine moiety is then transferred to the lipoamide cofactor of the H protein.</text>
</comment>
<comment type="catalytic activity">
    <reaction evidence="1">
        <text>N(6)-[(R)-lipoyl]-L-lysyl-[glycine-cleavage complex H protein] + glycine + H(+) = N(6)-[(R)-S(8)-aminomethyldihydrolipoyl]-L-lysyl-[glycine-cleavage complex H protein] + CO2</text>
        <dbReference type="Rhea" id="RHEA:24304"/>
        <dbReference type="Rhea" id="RHEA-COMP:10494"/>
        <dbReference type="Rhea" id="RHEA-COMP:10495"/>
        <dbReference type="ChEBI" id="CHEBI:15378"/>
        <dbReference type="ChEBI" id="CHEBI:16526"/>
        <dbReference type="ChEBI" id="CHEBI:57305"/>
        <dbReference type="ChEBI" id="CHEBI:83099"/>
        <dbReference type="ChEBI" id="CHEBI:83143"/>
        <dbReference type="EC" id="1.4.4.2"/>
    </reaction>
</comment>
<comment type="cofactor">
    <cofactor evidence="1">
        <name>pyridoxal 5'-phosphate</name>
        <dbReference type="ChEBI" id="CHEBI:597326"/>
    </cofactor>
</comment>
<comment type="subunit">
    <text evidence="1">The glycine cleavage system is composed of four proteins: P, T, L and H.</text>
</comment>
<comment type="similarity">
    <text evidence="1">Belongs to the GcvP family.</text>
</comment>
<sequence length="965" mass="104676">MTSKTIVNSLAELEQTQDFIRRHIGPSESETQAMLNDLGVESVDALIDEIVPSDIRLADLPNVEESKTEVQALADLKAVASLNKVNDTYIGLGYFGTLTPNVILRNVLENPGWYTAYTPYQPEIAQGRLESLLNYQQMCIDLTGLELASASLLDEGTAAAEAMALAKRVSKNKKSNLFFISDDVYPQTIDVVKQRAEMFGFDIVVAPAADAAEHDIFGALIQYPGASGQVTDVSELIAKIHDNKGIVAVAADIMSLVLLKSPGELGADAVIGSSQRFGVPMGYGGPHAAFFTTLDKYKRSLPGRIIGVSKDTRGKNALRMAMQTREQHIRREKANSNVCTAQVLLANMAAFYAVYHGPQGLKTIANRIHRLADILCLGTATKGLTAVHANYFDTLTFNVDNKDEIVARALAANANFRTDVDGQISIALDETTTRENVAQLFDILLGEGHGLNVSDLDDQIVASGHSSIPASLVRESAILTHPVFNSYHSETEMLRYIKRLENKDLALNHSMISLGSCTMKLNATAQMIPVSWPEFANMHPFAPVNQAQGYKAMIDELAKWLVELTGYDKMSMQPNSGAQGEYAGLIAISKYHESRGDSHRNICLIPASAHGTNPASAMMVDMKIVIVACDKEGNVDMADLKAKAEELADNLACIMITYPSTHGVYETTIAEICNIIHDNGGQVYLDGANMNAQVGLTSPGFIGADVSHLNLHKTFAIPHGGGGPGMGPIGVKSHLAPFLPDHALINVDEATKGNGAVSSAPFGSASILPITYLYIALLGKKGVTDATKYAITNANYVSKKLSEHYPILYSGKNGRVAHECIVDLRPLKASSGVTEVDMAKRLMDYGFHSPTMSFPVAGTFMIEPTESESKVELDRFIEAMVCIRDEVRKVESGEWASDNNPLHNAPHTLADITEPWDRPYSIQEAVFPVVAVTANKFWPTVNRIDDVFGDRNLICSCPPIESYID</sequence>
<dbReference type="EC" id="1.4.4.2" evidence="1"/>
<dbReference type="EMBL" id="CP000083">
    <property type="protein sequence ID" value="AAZ27305.1"/>
    <property type="molecule type" value="Genomic_DNA"/>
</dbReference>
<dbReference type="RefSeq" id="WP_011042113.1">
    <property type="nucleotide sequence ID" value="NC_003910.7"/>
</dbReference>
<dbReference type="SMR" id="Q486J6"/>
<dbReference type="STRING" id="167879.CPS_1276"/>
<dbReference type="KEGG" id="cps:CPS_1276"/>
<dbReference type="eggNOG" id="COG0403">
    <property type="taxonomic scope" value="Bacteria"/>
</dbReference>
<dbReference type="eggNOG" id="COG1003">
    <property type="taxonomic scope" value="Bacteria"/>
</dbReference>
<dbReference type="HOGENOM" id="CLU_004620_1_1_6"/>
<dbReference type="Proteomes" id="UP000000547">
    <property type="component" value="Chromosome"/>
</dbReference>
<dbReference type="GO" id="GO:0005829">
    <property type="term" value="C:cytosol"/>
    <property type="evidence" value="ECO:0007669"/>
    <property type="project" value="TreeGrafter"/>
</dbReference>
<dbReference type="GO" id="GO:0005960">
    <property type="term" value="C:glycine cleavage complex"/>
    <property type="evidence" value="ECO:0007669"/>
    <property type="project" value="TreeGrafter"/>
</dbReference>
<dbReference type="GO" id="GO:0016594">
    <property type="term" value="F:glycine binding"/>
    <property type="evidence" value="ECO:0007669"/>
    <property type="project" value="TreeGrafter"/>
</dbReference>
<dbReference type="GO" id="GO:0004375">
    <property type="term" value="F:glycine dehydrogenase (decarboxylating) activity"/>
    <property type="evidence" value="ECO:0007669"/>
    <property type="project" value="UniProtKB-EC"/>
</dbReference>
<dbReference type="GO" id="GO:0030170">
    <property type="term" value="F:pyridoxal phosphate binding"/>
    <property type="evidence" value="ECO:0007669"/>
    <property type="project" value="TreeGrafter"/>
</dbReference>
<dbReference type="GO" id="GO:0019464">
    <property type="term" value="P:glycine decarboxylation via glycine cleavage system"/>
    <property type="evidence" value="ECO:0007669"/>
    <property type="project" value="UniProtKB-UniRule"/>
</dbReference>
<dbReference type="CDD" id="cd00613">
    <property type="entry name" value="GDC-P"/>
    <property type="match status" value="2"/>
</dbReference>
<dbReference type="FunFam" id="3.40.640.10:FF:000005">
    <property type="entry name" value="Glycine dehydrogenase (decarboxylating), mitochondrial"/>
    <property type="match status" value="1"/>
</dbReference>
<dbReference type="FunFam" id="3.90.1150.10:FF:000007">
    <property type="entry name" value="Glycine dehydrogenase (decarboxylating), mitochondrial"/>
    <property type="match status" value="1"/>
</dbReference>
<dbReference type="FunFam" id="3.40.640.10:FF:000007">
    <property type="entry name" value="glycine dehydrogenase (Decarboxylating), mitochondrial"/>
    <property type="match status" value="1"/>
</dbReference>
<dbReference type="Gene3D" id="3.90.1150.10">
    <property type="entry name" value="Aspartate Aminotransferase, domain 1"/>
    <property type="match status" value="1"/>
</dbReference>
<dbReference type="Gene3D" id="3.40.640.10">
    <property type="entry name" value="Type I PLP-dependent aspartate aminotransferase-like (Major domain)"/>
    <property type="match status" value="2"/>
</dbReference>
<dbReference type="HAMAP" id="MF_00711">
    <property type="entry name" value="GcvP"/>
    <property type="match status" value="1"/>
</dbReference>
<dbReference type="InterPro" id="IPR003437">
    <property type="entry name" value="GcvP"/>
</dbReference>
<dbReference type="InterPro" id="IPR049316">
    <property type="entry name" value="GDC-P_C"/>
</dbReference>
<dbReference type="InterPro" id="IPR049315">
    <property type="entry name" value="GDC-P_N"/>
</dbReference>
<dbReference type="InterPro" id="IPR020581">
    <property type="entry name" value="GDC_P"/>
</dbReference>
<dbReference type="InterPro" id="IPR015424">
    <property type="entry name" value="PyrdxlP-dep_Trfase"/>
</dbReference>
<dbReference type="InterPro" id="IPR015421">
    <property type="entry name" value="PyrdxlP-dep_Trfase_major"/>
</dbReference>
<dbReference type="InterPro" id="IPR015422">
    <property type="entry name" value="PyrdxlP-dep_Trfase_small"/>
</dbReference>
<dbReference type="NCBIfam" id="TIGR00461">
    <property type="entry name" value="gcvP"/>
    <property type="match status" value="1"/>
</dbReference>
<dbReference type="NCBIfam" id="NF003346">
    <property type="entry name" value="PRK04366.1"/>
    <property type="match status" value="1"/>
</dbReference>
<dbReference type="PANTHER" id="PTHR11773:SF13">
    <property type="entry name" value="GLYCINE DEHYDROGENASE (DECARBOXYLATING)"/>
    <property type="match status" value="1"/>
</dbReference>
<dbReference type="PANTHER" id="PTHR11773">
    <property type="entry name" value="GLYCINE DEHYDROGENASE, DECARBOXYLATING"/>
    <property type="match status" value="1"/>
</dbReference>
<dbReference type="Pfam" id="PF21478">
    <property type="entry name" value="GcvP2_C"/>
    <property type="match status" value="1"/>
</dbReference>
<dbReference type="Pfam" id="PF02347">
    <property type="entry name" value="GDC-P"/>
    <property type="match status" value="2"/>
</dbReference>
<dbReference type="SUPFAM" id="SSF53383">
    <property type="entry name" value="PLP-dependent transferases"/>
    <property type="match status" value="2"/>
</dbReference>
<gene>
    <name evidence="1" type="primary">gcvP1</name>
    <name type="ordered locus">CPS_1276</name>
</gene>
<reference key="1">
    <citation type="journal article" date="2005" name="Proc. Natl. Acad. Sci. U.S.A.">
        <title>The psychrophilic lifestyle as revealed by the genome sequence of Colwellia psychrerythraea 34H through genomic and proteomic analyses.</title>
        <authorList>
            <person name="Methe B.A."/>
            <person name="Nelson K.E."/>
            <person name="Deming J.W."/>
            <person name="Momen B."/>
            <person name="Melamud E."/>
            <person name="Zhang X."/>
            <person name="Moult J."/>
            <person name="Madupu R."/>
            <person name="Nelson W.C."/>
            <person name="Dodson R.J."/>
            <person name="Brinkac L.M."/>
            <person name="Daugherty S.C."/>
            <person name="Durkin A.S."/>
            <person name="DeBoy R.T."/>
            <person name="Kolonay J.F."/>
            <person name="Sullivan S.A."/>
            <person name="Zhou L."/>
            <person name="Davidsen T.M."/>
            <person name="Wu M."/>
            <person name="Huston A.L."/>
            <person name="Lewis M."/>
            <person name="Weaver B."/>
            <person name="Weidman J.F."/>
            <person name="Khouri H."/>
            <person name="Utterback T.R."/>
            <person name="Feldblyum T.V."/>
            <person name="Fraser C.M."/>
        </authorList>
    </citation>
    <scope>NUCLEOTIDE SEQUENCE [LARGE SCALE GENOMIC DNA]</scope>
    <source>
        <strain>34H / ATCC BAA-681</strain>
    </source>
</reference>
<name>GCSP1_COLP3</name>
<proteinExistence type="inferred from homology"/>
<organism>
    <name type="scientific">Colwellia psychrerythraea (strain 34H / ATCC BAA-681)</name>
    <name type="common">Vibrio psychroerythus</name>
    <dbReference type="NCBI Taxonomy" id="167879"/>
    <lineage>
        <taxon>Bacteria</taxon>
        <taxon>Pseudomonadati</taxon>
        <taxon>Pseudomonadota</taxon>
        <taxon>Gammaproteobacteria</taxon>
        <taxon>Alteromonadales</taxon>
        <taxon>Colwelliaceae</taxon>
        <taxon>Colwellia</taxon>
    </lineage>
</organism>
<evidence type="ECO:0000255" key="1">
    <source>
        <dbReference type="HAMAP-Rule" id="MF_00711"/>
    </source>
</evidence>
<keyword id="KW-0560">Oxidoreductase</keyword>
<keyword id="KW-0663">Pyridoxal phosphate</keyword>
<accession>Q486J6</accession>
<feature type="chain" id="PRO_0000227102" description="Glycine dehydrogenase (decarboxylating) 1">
    <location>
        <begin position="1"/>
        <end position="965"/>
    </location>
</feature>
<feature type="modified residue" description="N6-(pyridoxal phosphate)lysine" evidence="1">
    <location>
        <position position="713"/>
    </location>
</feature>